<proteinExistence type="inferred from homology"/>
<protein>
    <recommendedName>
        <fullName evidence="1">Crossover junction endodeoxyribonuclease RuvC</fullName>
        <ecNumber evidence="1">3.1.21.10</ecNumber>
    </recommendedName>
    <alternativeName>
        <fullName evidence="1">Holliday junction nuclease RuvC</fullName>
    </alternativeName>
    <alternativeName>
        <fullName evidence="1">Holliday junction resolvase RuvC</fullName>
    </alternativeName>
</protein>
<accession>Q4FTV0</accession>
<evidence type="ECO:0000255" key="1">
    <source>
        <dbReference type="HAMAP-Rule" id="MF_00034"/>
    </source>
</evidence>
<sequence length="194" mass="21324">MAIIIGIDPGSRMTGYGILQQTGDKLTYIDSGTIRTDTKEMPERLKRIFNGLTRITQHHLKYADEPIYTAIEQVFMAENPDSALKLGQARGAAIAAMVALDLEVSEYTARQIKQAVCGYGAAAKEQVQDMVCRILTLDFVPQQDAADGLACAICHAHSSHSMNKLILNSAMRGRGASKKKGRWRLTEEDLGNLR</sequence>
<name>RUVC_PSYA2</name>
<gene>
    <name evidence="1" type="primary">ruvC</name>
    <name type="ordered locus">Psyc_0699</name>
</gene>
<dbReference type="EC" id="3.1.21.10" evidence="1"/>
<dbReference type="EMBL" id="CP000082">
    <property type="protein sequence ID" value="AAZ18558.1"/>
    <property type="molecule type" value="Genomic_DNA"/>
</dbReference>
<dbReference type="RefSeq" id="WP_011279985.1">
    <property type="nucleotide sequence ID" value="NC_007204.1"/>
</dbReference>
<dbReference type="SMR" id="Q4FTV0"/>
<dbReference type="STRING" id="259536.Psyc_0699"/>
<dbReference type="KEGG" id="par:Psyc_0699"/>
<dbReference type="eggNOG" id="COG0817">
    <property type="taxonomic scope" value="Bacteria"/>
</dbReference>
<dbReference type="HOGENOM" id="CLU_091257_2_1_6"/>
<dbReference type="OrthoDB" id="9805499at2"/>
<dbReference type="Proteomes" id="UP000000546">
    <property type="component" value="Chromosome"/>
</dbReference>
<dbReference type="GO" id="GO:0005737">
    <property type="term" value="C:cytoplasm"/>
    <property type="evidence" value="ECO:0007669"/>
    <property type="project" value="UniProtKB-SubCell"/>
</dbReference>
<dbReference type="GO" id="GO:0048476">
    <property type="term" value="C:Holliday junction resolvase complex"/>
    <property type="evidence" value="ECO:0007669"/>
    <property type="project" value="UniProtKB-UniRule"/>
</dbReference>
<dbReference type="GO" id="GO:0008821">
    <property type="term" value="F:crossover junction DNA endonuclease activity"/>
    <property type="evidence" value="ECO:0007669"/>
    <property type="project" value="UniProtKB-UniRule"/>
</dbReference>
<dbReference type="GO" id="GO:0003677">
    <property type="term" value="F:DNA binding"/>
    <property type="evidence" value="ECO:0007669"/>
    <property type="project" value="UniProtKB-KW"/>
</dbReference>
<dbReference type="GO" id="GO:0000287">
    <property type="term" value="F:magnesium ion binding"/>
    <property type="evidence" value="ECO:0007669"/>
    <property type="project" value="UniProtKB-UniRule"/>
</dbReference>
<dbReference type="GO" id="GO:0006310">
    <property type="term" value="P:DNA recombination"/>
    <property type="evidence" value="ECO:0007669"/>
    <property type="project" value="UniProtKB-UniRule"/>
</dbReference>
<dbReference type="GO" id="GO:0006281">
    <property type="term" value="P:DNA repair"/>
    <property type="evidence" value="ECO:0007669"/>
    <property type="project" value="UniProtKB-UniRule"/>
</dbReference>
<dbReference type="CDD" id="cd16962">
    <property type="entry name" value="RuvC"/>
    <property type="match status" value="1"/>
</dbReference>
<dbReference type="FunFam" id="3.30.420.10:FF:000002">
    <property type="entry name" value="Crossover junction endodeoxyribonuclease RuvC"/>
    <property type="match status" value="1"/>
</dbReference>
<dbReference type="Gene3D" id="3.30.420.10">
    <property type="entry name" value="Ribonuclease H-like superfamily/Ribonuclease H"/>
    <property type="match status" value="1"/>
</dbReference>
<dbReference type="HAMAP" id="MF_00034">
    <property type="entry name" value="RuvC"/>
    <property type="match status" value="1"/>
</dbReference>
<dbReference type="InterPro" id="IPR012337">
    <property type="entry name" value="RNaseH-like_sf"/>
</dbReference>
<dbReference type="InterPro" id="IPR036397">
    <property type="entry name" value="RNaseH_sf"/>
</dbReference>
<dbReference type="InterPro" id="IPR020563">
    <property type="entry name" value="X-over_junc_endoDNase_Mg_BS"/>
</dbReference>
<dbReference type="InterPro" id="IPR002176">
    <property type="entry name" value="X-over_junc_endoDNase_RuvC"/>
</dbReference>
<dbReference type="NCBIfam" id="TIGR00228">
    <property type="entry name" value="ruvC"/>
    <property type="match status" value="1"/>
</dbReference>
<dbReference type="PANTHER" id="PTHR30194">
    <property type="entry name" value="CROSSOVER JUNCTION ENDODEOXYRIBONUCLEASE RUVC"/>
    <property type="match status" value="1"/>
</dbReference>
<dbReference type="PANTHER" id="PTHR30194:SF3">
    <property type="entry name" value="CROSSOVER JUNCTION ENDODEOXYRIBONUCLEASE RUVC"/>
    <property type="match status" value="1"/>
</dbReference>
<dbReference type="Pfam" id="PF02075">
    <property type="entry name" value="RuvC"/>
    <property type="match status" value="1"/>
</dbReference>
<dbReference type="PRINTS" id="PR00696">
    <property type="entry name" value="RSOLVASERUVC"/>
</dbReference>
<dbReference type="SUPFAM" id="SSF53098">
    <property type="entry name" value="Ribonuclease H-like"/>
    <property type="match status" value="1"/>
</dbReference>
<dbReference type="PROSITE" id="PS01321">
    <property type="entry name" value="RUVC"/>
    <property type="match status" value="1"/>
</dbReference>
<feature type="chain" id="PRO_0000225168" description="Crossover junction endodeoxyribonuclease RuvC">
    <location>
        <begin position="1"/>
        <end position="194"/>
    </location>
</feature>
<feature type="active site" evidence="1">
    <location>
        <position position="8"/>
    </location>
</feature>
<feature type="active site" evidence="1">
    <location>
        <position position="72"/>
    </location>
</feature>
<feature type="active site" evidence="1">
    <location>
        <position position="144"/>
    </location>
</feature>
<feature type="binding site" evidence="1">
    <location>
        <position position="8"/>
    </location>
    <ligand>
        <name>Mg(2+)</name>
        <dbReference type="ChEBI" id="CHEBI:18420"/>
        <label>1</label>
    </ligand>
</feature>
<feature type="binding site" evidence="1">
    <location>
        <position position="72"/>
    </location>
    <ligand>
        <name>Mg(2+)</name>
        <dbReference type="ChEBI" id="CHEBI:18420"/>
        <label>2</label>
    </ligand>
</feature>
<feature type="binding site" evidence="1">
    <location>
        <position position="144"/>
    </location>
    <ligand>
        <name>Mg(2+)</name>
        <dbReference type="ChEBI" id="CHEBI:18420"/>
        <label>1</label>
    </ligand>
</feature>
<keyword id="KW-0963">Cytoplasm</keyword>
<keyword id="KW-0227">DNA damage</keyword>
<keyword id="KW-0233">DNA recombination</keyword>
<keyword id="KW-0234">DNA repair</keyword>
<keyword id="KW-0238">DNA-binding</keyword>
<keyword id="KW-0255">Endonuclease</keyword>
<keyword id="KW-0378">Hydrolase</keyword>
<keyword id="KW-0460">Magnesium</keyword>
<keyword id="KW-0479">Metal-binding</keyword>
<keyword id="KW-0540">Nuclease</keyword>
<keyword id="KW-1185">Reference proteome</keyword>
<reference key="1">
    <citation type="journal article" date="2010" name="Appl. Environ. Microbiol.">
        <title>The genome sequence of Psychrobacter arcticus 273-4, a psychroactive Siberian permafrost bacterium, reveals mechanisms for adaptation to low-temperature growth.</title>
        <authorList>
            <person name="Ayala-del-Rio H.L."/>
            <person name="Chain P.S."/>
            <person name="Grzymski J.J."/>
            <person name="Ponder M.A."/>
            <person name="Ivanova N."/>
            <person name="Bergholz P.W."/>
            <person name="Di Bartolo G."/>
            <person name="Hauser L."/>
            <person name="Land M."/>
            <person name="Bakermans C."/>
            <person name="Rodrigues D."/>
            <person name="Klappenbach J."/>
            <person name="Zarka D."/>
            <person name="Larimer F."/>
            <person name="Richardson P."/>
            <person name="Murray A."/>
            <person name="Thomashow M."/>
            <person name="Tiedje J.M."/>
        </authorList>
    </citation>
    <scope>NUCLEOTIDE SEQUENCE [LARGE SCALE GENOMIC DNA]</scope>
    <source>
        <strain>DSM 17307 / VKM B-2377 / 273-4</strain>
    </source>
</reference>
<comment type="function">
    <text evidence="1">The RuvA-RuvB-RuvC complex processes Holliday junction (HJ) DNA during genetic recombination and DNA repair. Endonuclease that resolves HJ intermediates. Cleaves cruciform DNA by making single-stranded nicks across the HJ at symmetrical positions within the homologous arms, yielding a 5'-phosphate and a 3'-hydroxyl group; requires a central core of homology in the junction. The consensus cleavage sequence is 5'-(A/T)TT(C/G)-3'. Cleavage occurs on the 3'-side of the TT dinucleotide at the point of strand exchange. HJ branch migration catalyzed by RuvA-RuvB allows RuvC to scan DNA until it finds its consensus sequence, where it cleaves and resolves the cruciform DNA.</text>
</comment>
<comment type="catalytic activity">
    <reaction evidence="1">
        <text>Endonucleolytic cleavage at a junction such as a reciprocal single-stranded crossover between two homologous DNA duplexes (Holliday junction).</text>
        <dbReference type="EC" id="3.1.21.10"/>
    </reaction>
</comment>
<comment type="cofactor">
    <cofactor evidence="1">
        <name>Mg(2+)</name>
        <dbReference type="ChEBI" id="CHEBI:18420"/>
    </cofactor>
    <text evidence="1">Binds 2 Mg(2+) ion per subunit.</text>
</comment>
<comment type="subunit">
    <text evidence="1">Homodimer which binds Holliday junction (HJ) DNA. The HJ becomes 2-fold symmetrical on binding to RuvC with unstacked arms; it has a different conformation from HJ DNA in complex with RuvA. In the full resolvosome a probable DNA-RuvA(4)-RuvB(12)-RuvC(2) complex forms which resolves the HJ.</text>
</comment>
<comment type="subcellular location">
    <subcellularLocation>
        <location evidence="1">Cytoplasm</location>
    </subcellularLocation>
</comment>
<comment type="similarity">
    <text evidence="1">Belongs to the RuvC family.</text>
</comment>
<organism>
    <name type="scientific">Psychrobacter arcticus (strain DSM 17307 / VKM B-2377 / 273-4)</name>
    <dbReference type="NCBI Taxonomy" id="259536"/>
    <lineage>
        <taxon>Bacteria</taxon>
        <taxon>Pseudomonadati</taxon>
        <taxon>Pseudomonadota</taxon>
        <taxon>Gammaproteobacteria</taxon>
        <taxon>Moraxellales</taxon>
        <taxon>Moraxellaceae</taxon>
        <taxon>Psychrobacter</taxon>
    </lineage>
</organism>